<accession>A1SYV2</accession>
<evidence type="ECO:0000255" key="1">
    <source>
        <dbReference type="HAMAP-Rule" id="MF_00406"/>
    </source>
</evidence>
<protein>
    <recommendedName>
        <fullName evidence="1">3-hydroxyacyl-[acyl-carrier-protein] dehydratase FabZ</fullName>
        <ecNumber evidence="1">4.2.1.59</ecNumber>
    </recommendedName>
    <alternativeName>
        <fullName evidence="1">(3R)-hydroxymyristoyl-[acyl-carrier-protein] dehydratase</fullName>
        <shortName evidence="1">(3R)-hydroxymyristoyl-ACP dehydrase</shortName>
    </alternativeName>
    <alternativeName>
        <fullName evidence="1">Beta-hydroxyacyl-ACP dehydratase</fullName>
    </alternativeName>
</protein>
<proteinExistence type="inferred from homology"/>
<sequence length="150" mass="17006">MTNELNSLDIKEIMDLLPHRYPFLLVDRVLDYVPGKRLHGIKNISFNEPQFTGHFPDTPIYPGVMILESLAQATGVLAFATYGKPAVNELYFLASMDKVRFRRPVIPGDVLDLEVIYLKDRRGMGKFECVAKVDGQVACEAMIMCARREI</sequence>
<feature type="chain" id="PRO_0000301915" description="3-hydroxyacyl-[acyl-carrier-protein] dehydratase FabZ">
    <location>
        <begin position="1"/>
        <end position="150"/>
    </location>
</feature>
<feature type="active site" evidence="1">
    <location>
        <position position="54"/>
    </location>
</feature>
<reference key="1">
    <citation type="journal article" date="2008" name="BMC Genomics">
        <title>Genomics of an extreme psychrophile, Psychromonas ingrahamii.</title>
        <authorList>
            <person name="Riley M."/>
            <person name="Staley J.T."/>
            <person name="Danchin A."/>
            <person name="Wang T.Z."/>
            <person name="Brettin T.S."/>
            <person name="Hauser L.J."/>
            <person name="Land M.L."/>
            <person name="Thompson L.S."/>
        </authorList>
    </citation>
    <scope>NUCLEOTIDE SEQUENCE [LARGE SCALE GENOMIC DNA]</scope>
    <source>
        <strain>DSM 17664 / CCUG 51855 / 37</strain>
    </source>
</reference>
<gene>
    <name evidence="1" type="primary">fabZ</name>
    <name type="ordered locus">Ping_2965</name>
</gene>
<name>FABZ_PSYIN</name>
<organism>
    <name type="scientific">Psychromonas ingrahamii (strain DSM 17664 / CCUG 51855 / 37)</name>
    <dbReference type="NCBI Taxonomy" id="357804"/>
    <lineage>
        <taxon>Bacteria</taxon>
        <taxon>Pseudomonadati</taxon>
        <taxon>Pseudomonadota</taxon>
        <taxon>Gammaproteobacteria</taxon>
        <taxon>Alteromonadales</taxon>
        <taxon>Psychromonadaceae</taxon>
        <taxon>Psychromonas</taxon>
    </lineage>
</organism>
<keyword id="KW-0963">Cytoplasm</keyword>
<keyword id="KW-0441">Lipid A biosynthesis</keyword>
<keyword id="KW-0444">Lipid biosynthesis</keyword>
<keyword id="KW-0443">Lipid metabolism</keyword>
<keyword id="KW-0456">Lyase</keyword>
<keyword id="KW-1185">Reference proteome</keyword>
<dbReference type="EC" id="4.2.1.59" evidence="1"/>
<dbReference type="EMBL" id="CP000510">
    <property type="protein sequence ID" value="ABM04667.1"/>
    <property type="molecule type" value="Genomic_DNA"/>
</dbReference>
<dbReference type="RefSeq" id="WP_011771221.1">
    <property type="nucleotide sequence ID" value="NC_008709.1"/>
</dbReference>
<dbReference type="SMR" id="A1SYV2"/>
<dbReference type="STRING" id="357804.Ping_2965"/>
<dbReference type="KEGG" id="pin:Ping_2965"/>
<dbReference type="eggNOG" id="COG0764">
    <property type="taxonomic scope" value="Bacteria"/>
</dbReference>
<dbReference type="HOGENOM" id="CLU_078912_1_0_6"/>
<dbReference type="OrthoDB" id="9772788at2"/>
<dbReference type="Proteomes" id="UP000000639">
    <property type="component" value="Chromosome"/>
</dbReference>
<dbReference type="GO" id="GO:0005737">
    <property type="term" value="C:cytoplasm"/>
    <property type="evidence" value="ECO:0007669"/>
    <property type="project" value="UniProtKB-SubCell"/>
</dbReference>
<dbReference type="GO" id="GO:0016020">
    <property type="term" value="C:membrane"/>
    <property type="evidence" value="ECO:0007669"/>
    <property type="project" value="GOC"/>
</dbReference>
<dbReference type="GO" id="GO:0019171">
    <property type="term" value="F:(3R)-hydroxyacyl-[acyl-carrier-protein] dehydratase activity"/>
    <property type="evidence" value="ECO:0007669"/>
    <property type="project" value="UniProtKB-EC"/>
</dbReference>
<dbReference type="GO" id="GO:0006633">
    <property type="term" value="P:fatty acid biosynthetic process"/>
    <property type="evidence" value="ECO:0007669"/>
    <property type="project" value="UniProtKB-UniRule"/>
</dbReference>
<dbReference type="GO" id="GO:0009245">
    <property type="term" value="P:lipid A biosynthetic process"/>
    <property type="evidence" value="ECO:0007669"/>
    <property type="project" value="UniProtKB-UniRule"/>
</dbReference>
<dbReference type="CDD" id="cd01288">
    <property type="entry name" value="FabZ"/>
    <property type="match status" value="1"/>
</dbReference>
<dbReference type="FunFam" id="3.10.129.10:FF:000001">
    <property type="entry name" value="3-hydroxyacyl-[acyl-carrier-protein] dehydratase FabZ"/>
    <property type="match status" value="1"/>
</dbReference>
<dbReference type="Gene3D" id="3.10.129.10">
    <property type="entry name" value="Hotdog Thioesterase"/>
    <property type="match status" value="1"/>
</dbReference>
<dbReference type="HAMAP" id="MF_00406">
    <property type="entry name" value="FabZ"/>
    <property type="match status" value="1"/>
</dbReference>
<dbReference type="InterPro" id="IPR013114">
    <property type="entry name" value="FabA_FabZ"/>
</dbReference>
<dbReference type="InterPro" id="IPR010084">
    <property type="entry name" value="FabZ"/>
</dbReference>
<dbReference type="InterPro" id="IPR029069">
    <property type="entry name" value="HotDog_dom_sf"/>
</dbReference>
<dbReference type="NCBIfam" id="TIGR01750">
    <property type="entry name" value="fabZ"/>
    <property type="match status" value="1"/>
</dbReference>
<dbReference type="NCBIfam" id="NF000582">
    <property type="entry name" value="PRK00006.1"/>
    <property type="match status" value="1"/>
</dbReference>
<dbReference type="PANTHER" id="PTHR30272">
    <property type="entry name" value="3-HYDROXYACYL-[ACYL-CARRIER-PROTEIN] DEHYDRATASE"/>
    <property type="match status" value="1"/>
</dbReference>
<dbReference type="PANTHER" id="PTHR30272:SF1">
    <property type="entry name" value="3-HYDROXYACYL-[ACYL-CARRIER-PROTEIN] DEHYDRATASE"/>
    <property type="match status" value="1"/>
</dbReference>
<dbReference type="Pfam" id="PF07977">
    <property type="entry name" value="FabA"/>
    <property type="match status" value="1"/>
</dbReference>
<dbReference type="SUPFAM" id="SSF54637">
    <property type="entry name" value="Thioesterase/thiol ester dehydrase-isomerase"/>
    <property type="match status" value="1"/>
</dbReference>
<comment type="function">
    <text evidence="1">Involved in unsaturated fatty acids biosynthesis. Catalyzes the dehydration of short chain beta-hydroxyacyl-ACPs and long chain saturated and unsaturated beta-hydroxyacyl-ACPs.</text>
</comment>
<comment type="catalytic activity">
    <reaction evidence="1">
        <text>a (3R)-hydroxyacyl-[ACP] = a (2E)-enoyl-[ACP] + H2O</text>
        <dbReference type="Rhea" id="RHEA:13097"/>
        <dbReference type="Rhea" id="RHEA-COMP:9925"/>
        <dbReference type="Rhea" id="RHEA-COMP:9945"/>
        <dbReference type="ChEBI" id="CHEBI:15377"/>
        <dbReference type="ChEBI" id="CHEBI:78784"/>
        <dbReference type="ChEBI" id="CHEBI:78827"/>
        <dbReference type="EC" id="4.2.1.59"/>
    </reaction>
</comment>
<comment type="subcellular location">
    <subcellularLocation>
        <location evidence="1">Cytoplasm</location>
    </subcellularLocation>
</comment>
<comment type="similarity">
    <text evidence="1">Belongs to the thioester dehydratase family. FabZ subfamily.</text>
</comment>